<gene>
    <name evidence="11" type="primary">ZC3HC1</name>
    <name evidence="7" type="synonym">NIPA</name>
    <name type="ORF">HSPC216</name>
</gene>
<keyword id="KW-0007">Acetylation</keyword>
<keyword id="KW-0025">Alternative splicing</keyword>
<keyword id="KW-0131">Cell cycle</keyword>
<keyword id="KW-0132">Cell division</keyword>
<keyword id="KW-0479">Metal-binding</keyword>
<keyword id="KW-0498">Mitosis</keyword>
<keyword id="KW-0539">Nucleus</keyword>
<keyword id="KW-0597">Phosphoprotein</keyword>
<keyword id="KW-1267">Proteomics identification</keyword>
<keyword id="KW-1185">Reference proteome</keyword>
<keyword id="KW-0833">Ubl conjugation pathway</keyword>
<keyword id="KW-0862">Zinc</keyword>
<keyword id="KW-0863">Zinc-finger</keyword>
<accession>Q86WB0</accession>
<accession>A6NH66</accession>
<accession>Q75MF3</accession>
<accession>Q75MF4</accession>
<accession>Q8N330</accession>
<accession>Q96F75</accession>
<accession>Q9HA34</accession>
<accession>Q9NVX4</accession>
<accession>Q9P0R0</accession>
<evidence type="ECO:0000256" key="1">
    <source>
        <dbReference type="SAM" id="MobiDB-lite"/>
    </source>
</evidence>
<evidence type="ECO:0000269" key="2">
    <source>
    </source>
</evidence>
<evidence type="ECO:0000269" key="3">
    <source>
    </source>
</evidence>
<evidence type="ECO:0000269" key="4">
    <source>
    </source>
</evidence>
<evidence type="ECO:0000269" key="5">
    <source>
    </source>
</evidence>
<evidence type="ECO:0000303" key="6">
    <source>
    </source>
</evidence>
<evidence type="ECO:0000303" key="7">
    <source>
    </source>
</evidence>
<evidence type="ECO:0000303" key="8">
    <source>
    </source>
</evidence>
<evidence type="ECO:0000305" key="9"/>
<evidence type="ECO:0000305" key="10">
    <source>
    </source>
</evidence>
<evidence type="ECO:0000312" key="11">
    <source>
        <dbReference type="HGNC" id="HGNC:29913"/>
    </source>
</evidence>
<evidence type="ECO:0007744" key="12">
    <source>
    </source>
</evidence>
<evidence type="ECO:0007744" key="13">
    <source>
    </source>
</evidence>
<evidence type="ECO:0007744" key="14">
    <source>
    </source>
</evidence>
<evidence type="ECO:0007744" key="15">
    <source>
    </source>
</evidence>
<evidence type="ECO:0007744" key="16">
    <source>
    </source>
</evidence>
<evidence type="ECO:0007744" key="17">
    <source>
    </source>
</evidence>
<evidence type="ECO:0007744" key="18">
    <source>
    </source>
</evidence>
<evidence type="ECO:0007744" key="19">
    <source>
    </source>
</evidence>
<evidence type="ECO:0007744" key="20">
    <source>
    </source>
</evidence>
<evidence type="ECO:0007744" key="21">
    <source>
    </source>
</evidence>
<evidence type="ECO:0007744" key="22">
    <source>
    </source>
</evidence>
<evidence type="ECO:0007744" key="23">
    <source>
    </source>
</evidence>
<protein>
    <recommendedName>
        <fullName>Zinc finger C3HC-type protein 1</fullName>
    </recommendedName>
    <alternativeName>
        <fullName evidence="7">Nuclear-interacting partner of ALK</fullName>
        <shortName evidence="7">hNIPA</shortName>
    </alternativeName>
    <alternativeName>
        <fullName>Nuclear-interacting partner of anaplastic lymphoma kinase</fullName>
    </alternativeName>
</protein>
<sequence>MAAPCEGQAFAVGVEKNWGAVVRSPEGTPQKIRQLIDEGIAPEEGGVDAKDTSATSQSVNGSPQAEQPSLESTSKEAFFSRVETFSSLKWAGKPFELSPLVCAKYGWVTVECDMLKCSSCQAFLCASLQPAFDFDRYKQRCAELKKALCTAHEKFCFWPDSPSPDRFGMLPLDEPAILVSEFLDRFQSLCHLDLQLPSLRPEDLKTMCLTEDKISLLLHLLEDELDHRTDERKTTIKLGSDIQVHVTACILSVCGWACSSSLESMQLSLITCSQCMRKVGLWGFQQIESSMTDLDASFGLTSSPIPGLEGRPERLPLVPESPRRMMTRSQDATFSPGSEQAEKSPGPIVSRTRSWDSSSPVDRPEPEAASPTTRTRPVTRSMGTGDTPGLEVPSSPLRKAKRARLCSSSSSDTSSRSFFDPTSQHRDWCPWVNITLGKESRENGGTEPDASAPAEPGWKAVLTILLAHKQSSQPAETDSMSLSEKSRKVFRIFRQWESLCSC</sequence>
<name>ZC3C1_HUMAN</name>
<reference key="1">
    <citation type="journal article" date="2003" name="J. Biol. Chem.">
        <title>Identification and characterization of a nuclear interacting partner of anaplastic lymphoma kinase (NIPA).</title>
        <authorList>
            <person name="Ouyang T."/>
            <person name="Bai R.-Y."/>
            <person name="Bassermann F."/>
            <person name="von Klitzing C."/>
            <person name="Klumpen S."/>
            <person name="Miething C."/>
            <person name="Morris S.W."/>
            <person name="Peschel C."/>
            <person name="Duyster J."/>
        </authorList>
    </citation>
    <scope>NUCLEOTIDE SEQUENCE [MRNA] (ISOFORM 1)</scope>
    <scope>SUBCELLULAR LOCATION</scope>
    <scope>TISSUE SPECIFICITY</scope>
    <scope>NUCLEAR LOCALIZATION SIGNAL</scope>
    <scope>PHOSPHORYLATION AT SER-354</scope>
    <scope>MUTAGENESIS OF TYR-105; TYR-137; SER-354; LYS-399 AND 398-ARG--LYS-401</scope>
</reference>
<reference key="2">
    <citation type="journal article" date="2000" name="Genome Res.">
        <title>Cloning and functional analysis of cDNAs with open reading frames for 300 previously undefined genes expressed in CD34+ hematopoietic stem/progenitor cells.</title>
        <authorList>
            <person name="Zhang Q.-H."/>
            <person name="Ye M."/>
            <person name="Wu X.-Y."/>
            <person name="Ren S.-X."/>
            <person name="Zhao M."/>
            <person name="Zhao C.-J."/>
            <person name="Fu G."/>
            <person name="Shen Y."/>
            <person name="Fan H.-Y."/>
            <person name="Lu G."/>
            <person name="Zhong M."/>
            <person name="Xu X.-R."/>
            <person name="Han Z.-G."/>
            <person name="Zhang J.-W."/>
            <person name="Tao J."/>
            <person name="Huang Q.-H."/>
            <person name="Zhou J."/>
            <person name="Hu G.-X."/>
            <person name="Gu J."/>
            <person name="Chen S.-J."/>
            <person name="Chen Z."/>
        </authorList>
    </citation>
    <scope>NUCLEOTIDE SEQUENCE [LARGE SCALE MRNA] (ISOFORM 3)</scope>
    <source>
        <tissue>Umbilical cord blood</tissue>
    </source>
</reference>
<reference key="3">
    <citation type="journal article" date="2004" name="Nat. Genet.">
        <title>Complete sequencing and characterization of 21,243 full-length human cDNAs.</title>
        <authorList>
            <person name="Ota T."/>
            <person name="Suzuki Y."/>
            <person name="Nishikawa T."/>
            <person name="Otsuki T."/>
            <person name="Sugiyama T."/>
            <person name="Irie R."/>
            <person name="Wakamatsu A."/>
            <person name="Hayashi K."/>
            <person name="Sato H."/>
            <person name="Nagai K."/>
            <person name="Kimura K."/>
            <person name="Makita H."/>
            <person name="Sekine M."/>
            <person name="Obayashi M."/>
            <person name="Nishi T."/>
            <person name="Shibahara T."/>
            <person name="Tanaka T."/>
            <person name="Ishii S."/>
            <person name="Yamamoto J."/>
            <person name="Saito K."/>
            <person name="Kawai Y."/>
            <person name="Isono Y."/>
            <person name="Nakamura Y."/>
            <person name="Nagahari K."/>
            <person name="Murakami K."/>
            <person name="Yasuda T."/>
            <person name="Iwayanagi T."/>
            <person name="Wagatsuma M."/>
            <person name="Shiratori A."/>
            <person name="Sudo H."/>
            <person name="Hosoiri T."/>
            <person name="Kaku Y."/>
            <person name="Kodaira H."/>
            <person name="Kondo H."/>
            <person name="Sugawara M."/>
            <person name="Takahashi M."/>
            <person name="Kanda K."/>
            <person name="Yokoi T."/>
            <person name="Furuya T."/>
            <person name="Kikkawa E."/>
            <person name="Omura Y."/>
            <person name="Abe K."/>
            <person name="Kamihara K."/>
            <person name="Katsuta N."/>
            <person name="Sato K."/>
            <person name="Tanikawa M."/>
            <person name="Yamazaki M."/>
            <person name="Ninomiya K."/>
            <person name="Ishibashi T."/>
            <person name="Yamashita H."/>
            <person name="Murakawa K."/>
            <person name="Fujimori K."/>
            <person name="Tanai H."/>
            <person name="Kimata M."/>
            <person name="Watanabe M."/>
            <person name="Hiraoka S."/>
            <person name="Chiba Y."/>
            <person name="Ishida S."/>
            <person name="Ono Y."/>
            <person name="Takiguchi S."/>
            <person name="Watanabe S."/>
            <person name="Yosida M."/>
            <person name="Hotuta T."/>
            <person name="Kusano J."/>
            <person name="Kanehori K."/>
            <person name="Takahashi-Fujii A."/>
            <person name="Hara H."/>
            <person name="Tanase T.-O."/>
            <person name="Nomura Y."/>
            <person name="Togiya S."/>
            <person name="Komai F."/>
            <person name="Hara R."/>
            <person name="Takeuchi K."/>
            <person name="Arita M."/>
            <person name="Imose N."/>
            <person name="Musashino K."/>
            <person name="Yuuki H."/>
            <person name="Oshima A."/>
            <person name="Sasaki N."/>
            <person name="Aotsuka S."/>
            <person name="Yoshikawa Y."/>
            <person name="Matsunawa H."/>
            <person name="Ichihara T."/>
            <person name="Shiohata N."/>
            <person name="Sano S."/>
            <person name="Moriya S."/>
            <person name="Momiyama H."/>
            <person name="Satoh N."/>
            <person name="Takami S."/>
            <person name="Terashima Y."/>
            <person name="Suzuki O."/>
            <person name="Nakagawa S."/>
            <person name="Senoh A."/>
            <person name="Mizoguchi H."/>
            <person name="Goto Y."/>
            <person name="Shimizu F."/>
            <person name="Wakebe H."/>
            <person name="Hishigaki H."/>
            <person name="Watanabe T."/>
            <person name="Sugiyama A."/>
            <person name="Takemoto M."/>
            <person name="Kawakami B."/>
            <person name="Yamazaki M."/>
            <person name="Watanabe K."/>
            <person name="Kumagai A."/>
            <person name="Itakura S."/>
            <person name="Fukuzumi Y."/>
            <person name="Fujimori Y."/>
            <person name="Komiyama M."/>
            <person name="Tashiro H."/>
            <person name="Tanigami A."/>
            <person name="Fujiwara T."/>
            <person name="Ono T."/>
            <person name="Yamada K."/>
            <person name="Fujii Y."/>
            <person name="Ozaki K."/>
            <person name="Hirao M."/>
            <person name="Ohmori Y."/>
            <person name="Kawabata A."/>
            <person name="Hikiji T."/>
            <person name="Kobatake N."/>
            <person name="Inagaki H."/>
            <person name="Ikema Y."/>
            <person name="Okamoto S."/>
            <person name="Okitani R."/>
            <person name="Kawakami T."/>
            <person name="Noguchi S."/>
            <person name="Itoh T."/>
            <person name="Shigeta K."/>
            <person name="Senba T."/>
            <person name="Matsumura K."/>
            <person name="Nakajima Y."/>
            <person name="Mizuno T."/>
            <person name="Morinaga M."/>
            <person name="Sasaki M."/>
            <person name="Togashi T."/>
            <person name="Oyama M."/>
            <person name="Hata H."/>
            <person name="Watanabe M."/>
            <person name="Komatsu T."/>
            <person name="Mizushima-Sugano J."/>
            <person name="Satoh T."/>
            <person name="Shirai Y."/>
            <person name="Takahashi Y."/>
            <person name="Nakagawa K."/>
            <person name="Okumura K."/>
            <person name="Nagase T."/>
            <person name="Nomura N."/>
            <person name="Kikuchi H."/>
            <person name="Masuho Y."/>
            <person name="Yamashita R."/>
            <person name="Nakai K."/>
            <person name="Yada T."/>
            <person name="Nakamura Y."/>
            <person name="Ohara O."/>
            <person name="Isogai T."/>
            <person name="Sugano S."/>
        </authorList>
    </citation>
    <scope>NUCLEOTIDE SEQUENCE [LARGE SCALE MRNA] (ISOFORMS 1 AND 2)</scope>
    <source>
        <tissue>Mammary gland</tissue>
    </source>
</reference>
<reference key="4">
    <citation type="journal article" date="2003" name="Nature">
        <title>The DNA sequence of human chromosome 7.</title>
        <authorList>
            <person name="Hillier L.W."/>
            <person name="Fulton R.S."/>
            <person name="Fulton L.A."/>
            <person name="Graves T.A."/>
            <person name="Pepin K.H."/>
            <person name="Wagner-McPherson C."/>
            <person name="Layman D."/>
            <person name="Maas J."/>
            <person name="Jaeger S."/>
            <person name="Walker R."/>
            <person name="Wylie K."/>
            <person name="Sekhon M."/>
            <person name="Becker M.C."/>
            <person name="O'Laughlin M.D."/>
            <person name="Schaller M.E."/>
            <person name="Fewell G.A."/>
            <person name="Delehaunty K.D."/>
            <person name="Miner T.L."/>
            <person name="Nash W.E."/>
            <person name="Cordes M."/>
            <person name="Du H."/>
            <person name="Sun H."/>
            <person name="Edwards J."/>
            <person name="Bradshaw-Cordum H."/>
            <person name="Ali J."/>
            <person name="Andrews S."/>
            <person name="Isak A."/>
            <person name="Vanbrunt A."/>
            <person name="Nguyen C."/>
            <person name="Du F."/>
            <person name="Lamar B."/>
            <person name="Courtney L."/>
            <person name="Kalicki J."/>
            <person name="Ozersky P."/>
            <person name="Bielicki L."/>
            <person name="Scott K."/>
            <person name="Holmes A."/>
            <person name="Harkins R."/>
            <person name="Harris A."/>
            <person name="Strong C.M."/>
            <person name="Hou S."/>
            <person name="Tomlinson C."/>
            <person name="Dauphin-Kohlberg S."/>
            <person name="Kozlowicz-Reilly A."/>
            <person name="Leonard S."/>
            <person name="Rohlfing T."/>
            <person name="Rock S.M."/>
            <person name="Tin-Wollam A.-M."/>
            <person name="Abbott A."/>
            <person name="Minx P."/>
            <person name="Maupin R."/>
            <person name="Strowmatt C."/>
            <person name="Latreille P."/>
            <person name="Miller N."/>
            <person name="Johnson D."/>
            <person name="Murray J."/>
            <person name="Woessner J.P."/>
            <person name="Wendl M.C."/>
            <person name="Yang S.-P."/>
            <person name="Schultz B.R."/>
            <person name="Wallis J.W."/>
            <person name="Spieth J."/>
            <person name="Bieri T.A."/>
            <person name="Nelson J.O."/>
            <person name="Berkowicz N."/>
            <person name="Wohldmann P.E."/>
            <person name="Cook L.L."/>
            <person name="Hickenbotham M.T."/>
            <person name="Eldred J."/>
            <person name="Williams D."/>
            <person name="Bedell J.A."/>
            <person name="Mardis E.R."/>
            <person name="Clifton S.W."/>
            <person name="Chissoe S.L."/>
            <person name="Marra M.A."/>
            <person name="Raymond C."/>
            <person name="Haugen E."/>
            <person name="Gillett W."/>
            <person name="Zhou Y."/>
            <person name="James R."/>
            <person name="Phelps K."/>
            <person name="Iadanoto S."/>
            <person name="Bubb K."/>
            <person name="Simms E."/>
            <person name="Levy R."/>
            <person name="Clendenning J."/>
            <person name="Kaul R."/>
            <person name="Kent W.J."/>
            <person name="Furey T.S."/>
            <person name="Baertsch R.A."/>
            <person name="Brent M.R."/>
            <person name="Keibler E."/>
            <person name="Flicek P."/>
            <person name="Bork P."/>
            <person name="Suyama M."/>
            <person name="Bailey J.A."/>
            <person name="Portnoy M.E."/>
            <person name="Torrents D."/>
            <person name="Chinwalla A.T."/>
            <person name="Gish W.R."/>
            <person name="Eddy S.R."/>
            <person name="McPherson J.D."/>
            <person name="Olson M.V."/>
            <person name="Eichler E.E."/>
            <person name="Green E.D."/>
            <person name="Waterston R.H."/>
            <person name="Wilson R.K."/>
        </authorList>
    </citation>
    <scope>NUCLEOTIDE SEQUENCE [LARGE SCALE GENOMIC DNA]</scope>
</reference>
<reference key="5">
    <citation type="journal article" date="2004" name="Genome Res.">
        <title>The status, quality, and expansion of the NIH full-length cDNA project: the Mammalian Gene Collection (MGC).</title>
        <authorList>
            <consortium name="The MGC Project Team"/>
        </authorList>
    </citation>
    <scope>NUCLEOTIDE SEQUENCE [LARGE SCALE MRNA] (ISOFORM 1)</scope>
    <scope>VARIANTS ALA-271 AND HIS-363</scope>
    <source>
        <tissue>Kidney</tissue>
        <tissue>Mammary gland</tissue>
    </source>
</reference>
<reference key="6">
    <citation type="journal article" date="2005" name="Cell">
        <title>NIPA defines an SCF-type mammalian E3 ligase that regulates mitotic entry.</title>
        <authorList>
            <person name="Bassermann F."/>
            <person name="von Klitzing C."/>
            <person name="Munch S."/>
            <person name="Bai R.-Y."/>
            <person name="Kawaguchi H."/>
            <person name="Morris S.W."/>
            <person name="Peschel C."/>
            <person name="Duyster J."/>
        </authorList>
    </citation>
    <scope>PHOSPHORYLATION</scope>
    <scope>DEVELOPMENTAL STAGE</scope>
</reference>
<reference key="7">
    <citation type="journal article" date="2006" name="Cell">
        <title>Global, in vivo, and site-specific phosphorylation dynamics in signaling networks.</title>
        <authorList>
            <person name="Olsen J.V."/>
            <person name="Blagoev B."/>
            <person name="Gnad F."/>
            <person name="Macek B."/>
            <person name="Kumar C."/>
            <person name="Mortensen P."/>
            <person name="Mann M."/>
        </authorList>
    </citation>
    <scope>PHOSPHORYLATION [LARGE SCALE ANALYSIS] AT SER-24 AND THR-28</scope>
    <scope>IDENTIFICATION BY MASS SPECTROMETRY [LARGE SCALE ANALYSIS]</scope>
    <source>
        <tissue>Cervix carcinoma</tissue>
    </source>
</reference>
<reference key="8">
    <citation type="journal article" date="2006" name="Nat. Biotechnol.">
        <title>A probability-based approach for high-throughput protein phosphorylation analysis and site localization.</title>
        <authorList>
            <person name="Beausoleil S.A."/>
            <person name="Villen J."/>
            <person name="Gerber S.A."/>
            <person name="Rush J."/>
            <person name="Gygi S.P."/>
        </authorList>
    </citation>
    <scope>PHOSPHORYLATION [LARGE SCALE ANALYSIS] AT SER-24 AND THR-28</scope>
    <scope>IDENTIFICATION BY MASS SPECTROMETRY [LARGE SCALE ANALYSIS]</scope>
    <source>
        <tissue>Cervix carcinoma</tissue>
    </source>
</reference>
<reference key="9">
    <citation type="journal article" date="2008" name="J. Proteome Res.">
        <title>Combining protein-based IMAC, peptide-based IMAC, and MudPIT for efficient phosphoproteomic analysis.</title>
        <authorList>
            <person name="Cantin G.T."/>
            <person name="Yi W."/>
            <person name="Lu B."/>
            <person name="Park S.K."/>
            <person name="Xu T."/>
            <person name="Lee J.-D."/>
            <person name="Yates J.R. III"/>
        </authorList>
    </citation>
    <scope>PHOSPHORYLATION [LARGE SCALE ANALYSIS] AT SER-321</scope>
    <scope>IDENTIFICATION BY MASS SPECTROMETRY [LARGE SCALE ANALYSIS]</scope>
    <source>
        <tissue>Cervix carcinoma</tissue>
    </source>
</reference>
<reference key="10">
    <citation type="journal article" date="2008" name="Mol. Cell">
        <title>Kinase-selective enrichment enables quantitative phosphoproteomics of the kinome across the cell cycle.</title>
        <authorList>
            <person name="Daub H."/>
            <person name="Olsen J.V."/>
            <person name="Bairlein M."/>
            <person name="Gnad F."/>
            <person name="Oppermann F.S."/>
            <person name="Korner R."/>
            <person name="Greff Z."/>
            <person name="Keri G."/>
            <person name="Stemmann O."/>
            <person name="Mann M."/>
        </authorList>
    </citation>
    <scope>PHOSPHORYLATION [LARGE SCALE ANALYSIS] AT SER-321</scope>
    <scope>IDENTIFICATION BY MASS SPECTROMETRY [LARGE SCALE ANALYSIS]</scope>
    <source>
        <tissue>Cervix carcinoma</tissue>
    </source>
</reference>
<reference key="11">
    <citation type="journal article" date="2008" name="Proc. Natl. Acad. Sci. U.S.A.">
        <title>A quantitative atlas of mitotic phosphorylation.</title>
        <authorList>
            <person name="Dephoure N."/>
            <person name="Zhou C."/>
            <person name="Villen J."/>
            <person name="Beausoleil S.A."/>
            <person name="Bakalarski C.E."/>
            <person name="Elledge S.J."/>
            <person name="Gygi S.P."/>
        </authorList>
    </citation>
    <scope>PHOSPHORYLATION [LARGE SCALE ANALYSIS] AT THR-333; SER-335; SER-338; SER-344; SER-354; SER-370; THR-384; THR-387 AND SER-395</scope>
    <scope>IDENTIFICATION BY MASS SPECTROMETRY [LARGE SCALE ANALYSIS]</scope>
    <source>
        <tissue>Cervix carcinoma</tissue>
    </source>
</reference>
<reference key="12">
    <citation type="journal article" date="2009" name="Anal. Chem.">
        <title>Lys-N and trypsin cover complementary parts of the phosphoproteome in a refined SCX-based approach.</title>
        <authorList>
            <person name="Gauci S."/>
            <person name="Helbig A.O."/>
            <person name="Slijper M."/>
            <person name="Krijgsveld J."/>
            <person name="Heck A.J."/>
            <person name="Mohammed S."/>
        </authorList>
    </citation>
    <scope>ACETYLATION [LARGE SCALE ANALYSIS] AT ALA-2</scope>
    <scope>CLEAVAGE OF INITIATOR METHIONINE [LARGE SCALE ANALYSIS]</scope>
    <scope>IDENTIFICATION BY MASS SPECTROMETRY [LARGE SCALE ANALYSIS]</scope>
</reference>
<reference key="13">
    <citation type="journal article" date="2009" name="Sci. Signal.">
        <title>Quantitative phosphoproteomic analysis of T cell receptor signaling reveals system-wide modulation of protein-protein interactions.</title>
        <authorList>
            <person name="Mayya V."/>
            <person name="Lundgren D.H."/>
            <person name="Hwang S.-I."/>
            <person name="Rezaul K."/>
            <person name="Wu L."/>
            <person name="Eng J.K."/>
            <person name="Rodionov V."/>
            <person name="Han D.K."/>
        </authorList>
    </citation>
    <scope>PHOSPHORYLATION [LARGE SCALE ANALYSIS] AT SER-58; SER-62; SER-335; SER-338; SER-344; SER-354; SER-359; SER-370; THR-387 AND SER-395</scope>
    <scope>IDENTIFICATION BY MASS SPECTROMETRY [LARGE SCALE ANALYSIS]</scope>
    <source>
        <tissue>Leukemic T-cell</tissue>
    </source>
</reference>
<reference key="14">
    <citation type="journal article" date="2010" name="Sci. Signal.">
        <title>Quantitative phosphoproteomics reveals widespread full phosphorylation site occupancy during mitosis.</title>
        <authorList>
            <person name="Olsen J.V."/>
            <person name="Vermeulen M."/>
            <person name="Santamaria A."/>
            <person name="Kumar C."/>
            <person name="Miller M.L."/>
            <person name="Jensen L.J."/>
            <person name="Gnad F."/>
            <person name="Cox J."/>
            <person name="Jensen T.S."/>
            <person name="Nigg E.A."/>
            <person name="Brunak S."/>
            <person name="Mann M."/>
        </authorList>
    </citation>
    <scope>PHOSPHORYLATION [LARGE SCALE ANALYSIS] AT SER-24; SER-321; SER-335 AND SER-344</scope>
    <scope>IDENTIFICATION BY MASS SPECTROMETRY [LARGE SCALE ANALYSIS]</scope>
    <source>
        <tissue>Cervix carcinoma</tissue>
    </source>
</reference>
<reference key="15">
    <citation type="journal article" date="2011" name="BMC Syst. Biol.">
        <title>Initial characterization of the human central proteome.</title>
        <authorList>
            <person name="Burkard T.R."/>
            <person name="Planyavsky M."/>
            <person name="Kaupe I."/>
            <person name="Breitwieser F.P."/>
            <person name="Buerckstuemmer T."/>
            <person name="Bennett K.L."/>
            <person name="Superti-Furga G."/>
            <person name="Colinge J."/>
        </authorList>
    </citation>
    <scope>IDENTIFICATION BY MASS SPECTROMETRY [LARGE SCALE ANALYSIS]</scope>
</reference>
<reference key="16">
    <citation type="journal article" date="2011" name="Sci. Signal.">
        <title>System-wide temporal characterization of the proteome and phosphoproteome of human embryonic stem cell differentiation.</title>
        <authorList>
            <person name="Rigbolt K.T."/>
            <person name="Prokhorova T.A."/>
            <person name="Akimov V."/>
            <person name="Henningsen J."/>
            <person name="Johansen P.T."/>
            <person name="Kratchmarova I."/>
            <person name="Kassem M."/>
            <person name="Mann M."/>
            <person name="Olsen J.V."/>
            <person name="Blagoev B."/>
        </authorList>
    </citation>
    <scope>PHOSPHORYLATION [LARGE SCALE ANALYSIS] AT SER-24; SER-62; SER-321; SER-329; SER-335; SER-344 AND SER-354</scope>
    <scope>IDENTIFICATION BY MASS SPECTROMETRY [LARGE SCALE ANALYSIS]</scope>
</reference>
<reference key="17">
    <citation type="journal article" date="2012" name="Mol. Cell. Proteomics">
        <title>Comparative large-scale characterisation of plant vs. mammal proteins reveals similar and idiosyncratic N-alpha acetylation features.</title>
        <authorList>
            <person name="Bienvenut W.V."/>
            <person name="Sumpton D."/>
            <person name="Martinez A."/>
            <person name="Lilla S."/>
            <person name="Espagne C."/>
            <person name="Meinnel T."/>
            <person name="Giglione C."/>
        </authorList>
    </citation>
    <scope>ACETYLATION [LARGE SCALE ANALYSIS] AT ALA-2</scope>
    <scope>CLEAVAGE OF INITIATOR METHIONINE [LARGE SCALE ANALYSIS]</scope>
    <scope>IDENTIFICATION BY MASS SPECTROMETRY [LARGE SCALE ANALYSIS]</scope>
</reference>
<reference key="18">
    <citation type="journal article" date="2013" name="J. Proteome Res.">
        <title>Toward a comprehensive characterization of a human cancer cell phosphoproteome.</title>
        <authorList>
            <person name="Zhou H."/>
            <person name="Di Palma S."/>
            <person name="Preisinger C."/>
            <person name="Peng M."/>
            <person name="Polat A.N."/>
            <person name="Heck A.J."/>
            <person name="Mohammed S."/>
        </authorList>
    </citation>
    <scope>PHOSPHORYLATION [LARGE SCALE ANALYSIS] AT SER-24; THR-28; SER-58; SER-62; THR-84; SER-321; SER-329; SER-335; SER-344; SER-354; SER-381; THR-387; SER-395 AND SER-483</scope>
    <scope>IDENTIFICATION BY MASS SPECTROMETRY [LARGE SCALE ANALYSIS]</scope>
    <source>
        <tissue>Cervix carcinoma</tissue>
        <tissue>Erythroleukemia</tissue>
    </source>
</reference>
<reference key="19">
    <citation type="journal article" date="2014" name="J. Proteomics">
        <title>An enzyme assisted RP-RPLC approach for in-depth analysis of human liver phosphoproteome.</title>
        <authorList>
            <person name="Bian Y."/>
            <person name="Song C."/>
            <person name="Cheng K."/>
            <person name="Dong M."/>
            <person name="Wang F."/>
            <person name="Huang J."/>
            <person name="Sun D."/>
            <person name="Wang L."/>
            <person name="Ye M."/>
            <person name="Zou H."/>
        </authorList>
    </citation>
    <scope>PHOSPHORYLATION [LARGE SCALE ANALYSIS] AT SER-321; SER-344; SER-354 AND SER-407</scope>
    <scope>IDENTIFICATION BY MASS SPECTROMETRY [LARGE SCALE ANALYSIS]</scope>
    <source>
        <tissue>Liver</tissue>
    </source>
</reference>
<reference key="20">
    <citation type="journal article" date="2021" name="Cells">
        <title>ZC3HC1 Is a Novel Inherent Component of the Nuclear Basket, Resident in a State of Reciprocal Dependence with TPR.</title>
        <authorList>
            <person name="Gunkel P."/>
            <person name="Iino H."/>
            <person name="Krull S."/>
            <person name="Cordes V.C."/>
        </authorList>
    </citation>
    <scope>FUNCTION</scope>
    <scope>SUBCELLULAR LOCATION</scope>
    <scope>INTERACTION WITH TPR</scope>
</reference>
<dbReference type="EMBL" id="AJ537494">
    <property type="protein sequence ID" value="CAD61161.1"/>
    <property type="molecule type" value="mRNA"/>
</dbReference>
<dbReference type="EMBL" id="AF151050">
    <property type="protein sequence ID" value="AAF36136.1"/>
    <property type="status" value="ALT_FRAME"/>
    <property type="molecule type" value="mRNA"/>
</dbReference>
<dbReference type="EMBL" id="AK001317">
    <property type="protein sequence ID" value="BAA91619.1"/>
    <property type="molecule type" value="mRNA"/>
</dbReference>
<dbReference type="EMBL" id="AK022373">
    <property type="protein sequence ID" value="BAB14024.1"/>
    <property type="molecule type" value="mRNA"/>
</dbReference>
<dbReference type="EMBL" id="AC073320">
    <property type="protein sequence ID" value="AAS07546.1"/>
    <property type="status" value="ALT_SEQ"/>
    <property type="molecule type" value="Genomic_DNA"/>
</dbReference>
<dbReference type="EMBL" id="AC073320">
    <property type="protein sequence ID" value="AAS07547.1"/>
    <property type="status" value="ALT_SEQ"/>
    <property type="molecule type" value="Genomic_DNA"/>
</dbReference>
<dbReference type="EMBL" id="AC087071">
    <property type="status" value="NOT_ANNOTATED_CDS"/>
    <property type="molecule type" value="Genomic_DNA"/>
</dbReference>
<dbReference type="EMBL" id="BC011551">
    <property type="protein sequence ID" value="AAH11551.1"/>
    <property type="molecule type" value="mRNA"/>
</dbReference>
<dbReference type="EMBL" id="BC028917">
    <property type="protein sequence ID" value="AAH28917.1"/>
    <property type="status" value="ALT_INIT"/>
    <property type="molecule type" value="mRNA"/>
</dbReference>
<dbReference type="CCDS" id="CCDS34753.1">
    <molecule id="Q86WB0-1"/>
</dbReference>
<dbReference type="CCDS" id="CCDS64767.1">
    <molecule id="Q86WB0-2"/>
</dbReference>
<dbReference type="CCDS" id="CCDS75659.1">
    <molecule id="Q86WB0-3"/>
</dbReference>
<dbReference type="RefSeq" id="NP_001269119.1">
    <molecule id="Q86WB0-2"/>
    <property type="nucleotide sequence ID" value="NM_001282190.2"/>
</dbReference>
<dbReference type="RefSeq" id="NP_001269120.1">
    <molecule id="Q86WB0-3"/>
    <property type="nucleotide sequence ID" value="NM_001282191.1"/>
</dbReference>
<dbReference type="RefSeq" id="NP_057562.3">
    <molecule id="Q86WB0-1"/>
    <property type="nucleotide sequence ID" value="NM_016478.4"/>
</dbReference>
<dbReference type="BioGRID" id="119592">
    <property type="interactions" value="134"/>
</dbReference>
<dbReference type="CORUM" id="Q86WB0"/>
<dbReference type="FunCoup" id="Q86WB0">
    <property type="interactions" value="2865"/>
</dbReference>
<dbReference type="IntAct" id="Q86WB0">
    <property type="interactions" value="104"/>
</dbReference>
<dbReference type="MINT" id="Q86WB0"/>
<dbReference type="STRING" id="9606.ENSP00000351052"/>
<dbReference type="GlyGen" id="Q86WB0">
    <property type="glycosylation" value="3 sites, 2 N-linked glycans (1 site), 1 O-linked glycan (1 site)"/>
</dbReference>
<dbReference type="iPTMnet" id="Q86WB0"/>
<dbReference type="MetOSite" id="Q86WB0"/>
<dbReference type="PhosphoSitePlus" id="Q86WB0"/>
<dbReference type="SwissPalm" id="Q86WB0"/>
<dbReference type="BioMuta" id="ZC3HC1"/>
<dbReference type="DMDM" id="73921220"/>
<dbReference type="jPOST" id="Q86WB0"/>
<dbReference type="MassIVE" id="Q86WB0"/>
<dbReference type="PaxDb" id="9606-ENSP00000351052"/>
<dbReference type="PeptideAtlas" id="Q86WB0"/>
<dbReference type="ProteomicsDB" id="70140">
    <molecule id="Q86WB0-1"/>
</dbReference>
<dbReference type="ProteomicsDB" id="70141">
    <molecule id="Q86WB0-2"/>
</dbReference>
<dbReference type="ProteomicsDB" id="70142">
    <molecule id="Q86WB0-3"/>
</dbReference>
<dbReference type="Pumba" id="Q86WB0"/>
<dbReference type="Antibodypedia" id="17928">
    <property type="antibodies" value="255 antibodies from 31 providers"/>
</dbReference>
<dbReference type="DNASU" id="51530"/>
<dbReference type="Ensembl" id="ENST00000358303.9">
    <molecule id="Q86WB0-1"/>
    <property type="protein sequence ID" value="ENSP00000351052.4"/>
    <property type="gene ID" value="ENSG00000091732.18"/>
</dbReference>
<dbReference type="Ensembl" id="ENST00000360708.9">
    <molecule id="Q86WB0-3"/>
    <property type="protein sequence ID" value="ENSP00000353933.5"/>
    <property type="gene ID" value="ENSG00000091732.18"/>
</dbReference>
<dbReference type="GeneID" id="51530"/>
<dbReference type="KEGG" id="hsa:51530"/>
<dbReference type="MANE-Select" id="ENST00000358303.9">
    <property type="protein sequence ID" value="ENSP00000351052.4"/>
    <property type="RefSeq nucleotide sequence ID" value="NM_016478.5"/>
    <property type="RefSeq protein sequence ID" value="NP_057562.3"/>
</dbReference>
<dbReference type="UCSC" id="uc003vpi.4">
    <molecule id="Q86WB0-1"/>
    <property type="organism name" value="human"/>
</dbReference>
<dbReference type="AGR" id="HGNC:29913"/>
<dbReference type="CTD" id="51530"/>
<dbReference type="DisGeNET" id="51530"/>
<dbReference type="GeneCards" id="ZC3HC1"/>
<dbReference type="HGNC" id="HGNC:29913">
    <property type="gene designation" value="ZC3HC1"/>
</dbReference>
<dbReference type="HPA" id="ENSG00000091732">
    <property type="expression patterns" value="Low tissue specificity"/>
</dbReference>
<dbReference type="MIM" id="619746">
    <property type="type" value="gene"/>
</dbReference>
<dbReference type="neXtProt" id="NX_Q86WB0"/>
<dbReference type="OpenTargets" id="ENSG00000091732"/>
<dbReference type="PharmGKB" id="PA134931869"/>
<dbReference type="VEuPathDB" id="HostDB:ENSG00000091732"/>
<dbReference type="eggNOG" id="KOG4765">
    <property type="taxonomic scope" value="Eukaryota"/>
</dbReference>
<dbReference type="GeneTree" id="ENSGT00390000006086"/>
<dbReference type="InParanoid" id="Q86WB0"/>
<dbReference type="OMA" id="EWCPWIS"/>
<dbReference type="OrthoDB" id="614844at2759"/>
<dbReference type="PAN-GO" id="Q86WB0">
    <property type="GO annotations" value="1 GO annotation based on evolutionary models"/>
</dbReference>
<dbReference type="PhylomeDB" id="Q86WB0"/>
<dbReference type="TreeFam" id="TF314674"/>
<dbReference type="PathwayCommons" id="Q86WB0"/>
<dbReference type="Reactome" id="R-HSA-9725371">
    <property type="pathway name" value="Nuclear events stimulated by ALK signaling in cancer"/>
</dbReference>
<dbReference type="SignaLink" id="Q86WB0"/>
<dbReference type="SIGNOR" id="Q86WB0"/>
<dbReference type="BioGRID-ORCS" id="51530">
    <property type="hits" value="68 hits in 1168 CRISPR screens"/>
</dbReference>
<dbReference type="ChiTaRS" id="ZC3HC1">
    <property type="organism name" value="human"/>
</dbReference>
<dbReference type="GeneWiki" id="ZC3HC1"/>
<dbReference type="GenomeRNAi" id="51530"/>
<dbReference type="Pharos" id="Q86WB0">
    <property type="development level" value="Tbio"/>
</dbReference>
<dbReference type="PRO" id="PR:Q86WB0"/>
<dbReference type="Proteomes" id="UP000005640">
    <property type="component" value="Chromosome 7"/>
</dbReference>
<dbReference type="RNAct" id="Q86WB0">
    <property type="molecule type" value="protein"/>
</dbReference>
<dbReference type="Bgee" id="ENSG00000091732">
    <property type="expression patterns" value="Expressed in tibialis anterior and 173 other cell types or tissues"/>
</dbReference>
<dbReference type="ExpressionAtlas" id="Q86WB0">
    <property type="expression patterns" value="baseline and differential"/>
</dbReference>
<dbReference type="GO" id="GO:0031965">
    <property type="term" value="C:nuclear membrane"/>
    <property type="evidence" value="ECO:0000314"/>
    <property type="project" value="HPA"/>
</dbReference>
<dbReference type="GO" id="GO:0044615">
    <property type="term" value="C:nuclear pore nuclear basket"/>
    <property type="evidence" value="ECO:0000314"/>
    <property type="project" value="UniProtKB"/>
</dbReference>
<dbReference type="GO" id="GO:0005654">
    <property type="term" value="C:nucleoplasm"/>
    <property type="evidence" value="ECO:0000314"/>
    <property type="project" value="HPA"/>
</dbReference>
<dbReference type="GO" id="GO:0005634">
    <property type="term" value="C:nucleus"/>
    <property type="evidence" value="ECO:0000314"/>
    <property type="project" value="LIFEdb"/>
</dbReference>
<dbReference type="GO" id="GO:0019901">
    <property type="term" value="F:protein kinase binding"/>
    <property type="evidence" value="ECO:0000353"/>
    <property type="project" value="UniProtKB"/>
</dbReference>
<dbReference type="GO" id="GO:0008270">
    <property type="term" value="F:zinc ion binding"/>
    <property type="evidence" value="ECO:0007669"/>
    <property type="project" value="UniProtKB-KW"/>
</dbReference>
<dbReference type="GO" id="GO:0051301">
    <property type="term" value="P:cell division"/>
    <property type="evidence" value="ECO:0007669"/>
    <property type="project" value="UniProtKB-KW"/>
</dbReference>
<dbReference type="GO" id="GO:0016567">
    <property type="term" value="P:protein ubiquitination"/>
    <property type="evidence" value="ECO:0007669"/>
    <property type="project" value="UniProtKB-UniPathway"/>
</dbReference>
<dbReference type="InterPro" id="IPR013909">
    <property type="entry name" value="NuBaID_C"/>
</dbReference>
<dbReference type="InterPro" id="IPR012935">
    <property type="entry name" value="NuBaID_N"/>
</dbReference>
<dbReference type="PANTHER" id="PTHR15835">
    <property type="entry name" value="NUCLEAR-INTERACTING PARTNER OF ALK"/>
    <property type="match status" value="1"/>
</dbReference>
<dbReference type="PANTHER" id="PTHR15835:SF6">
    <property type="entry name" value="ZINC FINGER C3HC-TYPE PROTEIN 1"/>
    <property type="match status" value="1"/>
</dbReference>
<dbReference type="Pfam" id="PF08600">
    <property type="entry name" value="NuBaID_C"/>
    <property type="match status" value="1"/>
</dbReference>
<dbReference type="Pfam" id="PF07967">
    <property type="entry name" value="zf-C3HC"/>
    <property type="match status" value="1"/>
</dbReference>
<organism>
    <name type="scientific">Homo sapiens</name>
    <name type="common">Human</name>
    <dbReference type="NCBI Taxonomy" id="9606"/>
    <lineage>
        <taxon>Eukaryota</taxon>
        <taxon>Metazoa</taxon>
        <taxon>Chordata</taxon>
        <taxon>Craniata</taxon>
        <taxon>Vertebrata</taxon>
        <taxon>Euteleostomi</taxon>
        <taxon>Mammalia</taxon>
        <taxon>Eutheria</taxon>
        <taxon>Euarchontoglires</taxon>
        <taxon>Primates</taxon>
        <taxon>Haplorrhini</taxon>
        <taxon>Catarrhini</taxon>
        <taxon>Hominidae</taxon>
        <taxon>Homo</taxon>
    </lineage>
</organism>
<proteinExistence type="evidence at protein level"/>
<comment type="function">
    <text evidence="5">Required for proper positioning of a substantial amount of TPR at the nuclear basket (NB) through interaction with TPR.</text>
</comment>
<comment type="subunit">
    <text evidence="5">Interacts with TPR; this interaction mediates ZC3HC1 nuclear envelopes (NE)-association but also required for proper positioning of a substantial amount of TPR at the nuclear basket (NB).</text>
</comment>
<comment type="interaction">
    <interactant intactId="EBI-1053696">
        <id>Q86WB0</id>
    </interactant>
    <interactant intactId="EBI-12585277">
        <id>Q8TBG4</id>
        <label>ETNPPL</label>
    </interactant>
    <organismsDiffer>false</organismsDiffer>
    <experiments>2</experiments>
</comment>
<comment type="interaction">
    <interactant intactId="EBI-1053696">
        <id>Q86WB0</id>
    </interactant>
    <interactant intactId="EBI-1570153">
        <id>Q6UVJ0</id>
        <label>SASS6</label>
    </interactant>
    <organismsDiffer>false</organismsDiffer>
    <experiments>2</experiments>
</comment>
<comment type="interaction">
    <interactant intactId="EBI-25894765">
        <id>Q86WB0-2</id>
    </interactant>
    <interactant intactId="EBI-930964">
        <id>P54253</id>
        <label>ATXN1</label>
    </interactant>
    <organismsDiffer>false</organismsDiffer>
    <experiments>6</experiments>
</comment>
<comment type="interaction">
    <interactant intactId="EBI-25894765">
        <id>Q86WB0-2</id>
    </interactant>
    <interactant intactId="EBI-5235340">
        <id>Q7Z699</id>
        <label>SPRED1</label>
    </interactant>
    <organismsDiffer>false</organismsDiffer>
    <experiments>3</experiments>
</comment>
<comment type="interaction">
    <interactant intactId="EBI-25894765">
        <id>Q86WB0-2</id>
    </interactant>
    <interactant intactId="EBI-714860">
        <id>P09936</id>
        <label>UCHL1</label>
    </interactant>
    <organismsDiffer>false</organismsDiffer>
    <experiments>3</experiments>
</comment>
<comment type="subcellular location">
    <subcellularLocation>
        <location evidence="2">Nucleus</location>
    </subcellularLocation>
    <subcellularLocation>
        <location evidence="5">Nucleus envelope</location>
    </subcellularLocation>
    <text evidence="5">Resident of the nuclear basket (NB) (PubMed:34440706). Occurs at the nuclear envelopes (NE) of all TPR-containing cell types, including proliferating and non-dividing, terminally differentiated cells of different morphogenetic origin (PubMed:34440706).</text>
</comment>
<comment type="alternative products">
    <event type="alternative splicing"/>
    <isoform>
        <id>Q86WB0-1</id>
        <name>1</name>
        <sequence type="displayed"/>
    </isoform>
    <isoform>
        <id>Q86WB0-2</id>
        <name>2</name>
        <sequence type="described" ref="VSP_015217"/>
    </isoform>
    <isoform>
        <id>Q86WB0-3</id>
        <name>3</name>
        <sequence type="described" ref="VSP_015218"/>
    </isoform>
</comment>
<comment type="tissue specificity">
    <text evidence="2">Widely expressed. Highly expressed in heart, skeletal muscle and testis. Expressed in brain, placenta, lung, kidney, liver, pancreas, spleen, thymus, prostate, ovary small intestine and colon. Weakly or not expressed in leukocytes.</text>
</comment>
<comment type="developmental stage">
    <text evidence="4">Weakly expressed in G0/G1 phases, abundant during S and G2/M phases, and strongly decreases thereafter.</text>
</comment>
<comment type="PTM">
    <text evidence="2">Phosphorylated (PubMed:12748172). May also be weakly phosphorylated on Tyr residues (PubMed:12748172).</text>
</comment>
<comment type="caution">
    <text evidence="2 4 5 10">Reported to contain a F-box domain. Such domain is however not predicted by any detection method and Gunkel et al. does not confirm experimentally the F-box domain (PubMed:34440706). Moreover, there are some discrepancies about the function of ZC3HC1 and its binding partners (PubMed:12748172, PubMed:16009132, PubMed:34440706). Gunkel et al. shows that, in interphase, ZC3HC1 is neither a binding partner of SKP1 nor is be part of the SCF(NIPA) E3 complex with SKP1, RBX1 and CUL1 as Bassermann et al. reported it (PubMed:16009132, PubMed:34440706). In addition, Gunkel et al. shows that it does not interacts with CCNB1 and consequently that it does not directly involved in regulating the subcellular distribution and amounts of CCNB1 in proliferating cells in interphase as Bassermann et al. reported it (PubMed:16009132, PubMed:34440706). Finally, Gunkel et al. does not find that ZC3HC1 is a binding partner of the oncogenic tyrosine kinase NPM-ALK fusion protein through which it would be function as an anti-apoptotic protein as Oyang T. et al. has initially reported (PubMed:12748172, PubMed:34440706).</text>
</comment>
<comment type="sequence caution" evidence="9">
    <conflict type="frameshift">
        <sequence resource="EMBL-CDS" id="AAF36136"/>
    </conflict>
</comment>
<comment type="sequence caution" evidence="9">
    <conflict type="erroneous initiation">
        <sequence resource="EMBL-CDS" id="AAH28917"/>
    </conflict>
    <text>Truncated N-terminus.</text>
</comment>
<comment type="sequence caution" evidence="9">
    <conflict type="erroneous gene model prediction">
        <sequence resource="EMBL-CDS" id="AAS07546"/>
    </conflict>
</comment>
<comment type="sequence caution" evidence="9">
    <conflict type="erroneous gene model prediction">
        <sequence resource="EMBL-CDS" id="AAS07547"/>
    </conflict>
</comment>
<feature type="initiator methionine" description="Removed" evidence="17 21">
    <location>
        <position position="1"/>
    </location>
</feature>
<feature type="chain" id="PRO_0000096849" description="Zinc finger C3HC-type protein 1">
    <location>
        <begin position="2"/>
        <end position="502"/>
    </location>
</feature>
<feature type="zinc finger region" description="C3HC-type">
    <location>
        <begin position="102"/>
        <end position="156"/>
    </location>
</feature>
<feature type="region of interest" description="Disordered" evidence="1">
    <location>
        <begin position="36"/>
        <end position="73"/>
    </location>
</feature>
<feature type="region of interest" description="F-box-like">
    <location>
        <begin position="170"/>
        <end position="210"/>
    </location>
</feature>
<feature type="region of interest" description="Disordered" evidence="1">
    <location>
        <begin position="302"/>
        <end position="423"/>
    </location>
</feature>
<feature type="short sequence motif" description="Nuclear localization signal" evidence="2">
    <location>
        <begin position="396"/>
        <end position="402"/>
    </location>
</feature>
<feature type="compositionally biased region" description="Polar residues" evidence="1">
    <location>
        <begin position="52"/>
        <end position="72"/>
    </location>
</feature>
<feature type="compositionally biased region" description="Polar residues" evidence="1">
    <location>
        <begin position="327"/>
        <end position="338"/>
    </location>
</feature>
<feature type="compositionally biased region" description="Polar residues" evidence="1">
    <location>
        <begin position="351"/>
        <end position="360"/>
    </location>
</feature>
<feature type="compositionally biased region" description="Low complexity" evidence="1">
    <location>
        <begin position="371"/>
        <end position="380"/>
    </location>
</feature>
<feature type="compositionally biased region" description="Low complexity" evidence="1">
    <location>
        <begin position="407"/>
        <end position="422"/>
    </location>
</feature>
<feature type="modified residue" description="N-acetylalanine" evidence="17 21">
    <location>
        <position position="2"/>
    </location>
</feature>
<feature type="modified residue" description="Phosphoserine" evidence="12 13 19 20 22">
    <location>
        <position position="24"/>
    </location>
</feature>
<feature type="modified residue" description="Phosphothreonine" evidence="12 13 22">
    <location>
        <position position="28"/>
    </location>
</feature>
<feature type="modified residue" description="Phosphoserine" evidence="18 22">
    <location>
        <position position="58"/>
    </location>
</feature>
<feature type="modified residue" description="Phosphoserine" evidence="18 20 22">
    <location>
        <position position="62"/>
    </location>
</feature>
<feature type="modified residue" description="Phosphothreonine" evidence="22">
    <location>
        <position position="84"/>
    </location>
</feature>
<feature type="modified residue" description="Phosphoserine" evidence="14 16 19 20 22 23">
    <location>
        <position position="321"/>
    </location>
</feature>
<feature type="modified residue" description="Phosphoserine" evidence="20 22">
    <location>
        <position position="329"/>
    </location>
</feature>
<feature type="modified residue" description="Phosphothreonine" evidence="15">
    <location>
        <position position="333"/>
    </location>
</feature>
<feature type="modified residue" description="Phosphoserine" evidence="15 18 19 20 22">
    <location>
        <position position="335"/>
    </location>
</feature>
<feature type="modified residue" description="Phosphoserine" evidence="15 18">
    <location>
        <position position="338"/>
    </location>
</feature>
<feature type="modified residue" description="Phosphoserine" evidence="15 18 19 20 22 23">
    <location>
        <position position="344"/>
    </location>
</feature>
<feature type="modified residue" description="Phosphoserine" evidence="2 15 18 20 22 23">
    <location>
        <position position="354"/>
    </location>
</feature>
<feature type="modified residue" description="Phosphoserine" evidence="18">
    <location>
        <position position="359"/>
    </location>
</feature>
<feature type="modified residue" description="Phosphoserine" evidence="15 18">
    <location>
        <position position="370"/>
    </location>
</feature>
<feature type="modified residue" description="Phosphoserine" evidence="22">
    <location>
        <position position="381"/>
    </location>
</feature>
<feature type="modified residue" description="Phosphothreonine" evidence="15">
    <location>
        <position position="384"/>
    </location>
</feature>
<feature type="modified residue" description="Phosphothreonine" evidence="15 18 22">
    <location>
        <position position="387"/>
    </location>
</feature>
<feature type="modified residue" description="Phosphoserine" evidence="15 18 22">
    <location>
        <position position="395"/>
    </location>
</feature>
<feature type="modified residue" description="Phosphoserine" evidence="23">
    <location>
        <position position="407"/>
    </location>
</feature>
<feature type="modified residue" description="Phosphoserine" evidence="22">
    <location>
        <position position="483"/>
    </location>
</feature>
<feature type="splice variant" id="VSP_015217" description="In isoform 2." evidence="8">
    <original>MAAPCEGQAFAVGVEKNWGAVVRSPEGTPQKIRQLIDEGIAPEEGGVDA</original>
    <variation>MRGLPRKREAWTQPHPLEALYESLRVLE</variation>
    <location>
        <begin position="1"/>
        <end position="49"/>
    </location>
</feature>
<feature type="splice variant" id="VSP_015218" description="In isoform 3." evidence="6">
    <location>
        <begin position="341"/>
        <end position="411"/>
    </location>
</feature>
<feature type="sequence variant" id="VAR_023312" description="In dbSNP:rs1464890." evidence="3">
    <original>T</original>
    <variation>A</variation>
    <location>
        <position position="271"/>
    </location>
</feature>
<feature type="sequence variant" id="VAR_023313" description="In dbSNP:rs11556924." evidence="3">
    <original>R</original>
    <variation>H</variation>
    <location>
        <position position="363"/>
    </location>
</feature>
<feature type="mutagenesis site" description="Does not strongly affect phosphorylation status; when associated with F-137." evidence="2">
    <original>Y</original>
    <variation>F</variation>
    <location>
        <position position="105"/>
    </location>
</feature>
<feature type="mutagenesis site" description="Does not strongly affect phosphorylation status; when associated with F-105." evidence="2">
    <original>Y</original>
    <variation>F</variation>
    <location>
        <position position="137"/>
    </location>
</feature>
<feature type="mutagenesis site" description="Strongly reduces phosphorylation." evidence="2 4">
    <original>S</original>
    <variation>A</variation>
    <location>
        <position position="354"/>
    </location>
</feature>
<feature type="mutagenesis site" description="Induces a complete cytoplasmic redistribution." evidence="2">
    <original>RKAK</original>
    <variation>AAAA</variation>
    <location>
        <begin position="398"/>
        <end position="401"/>
    </location>
</feature>
<feature type="mutagenesis site" description="Induces a partial cytoplasmic redistribution." evidence="2">
    <original>K</original>
    <variation>P</variation>
    <location>
        <position position="399"/>
    </location>
</feature>
<feature type="sequence conflict" description="In Ref. 3; BAB14024." evidence="9" ref="3">
    <original>V</original>
    <variation>I</variation>
    <location>
        <position position="179"/>
    </location>
</feature>
<feature type="sequence conflict" description="In Ref. 2; AAF36136." evidence="9" ref="2">
    <original>K</original>
    <variation>R</variation>
    <location>
        <position position="278"/>
    </location>
</feature>